<keyword id="KW-0067">ATP-binding</keyword>
<keyword id="KW-0963">Cytoplasm</keyword>
<keyword id="KW-0227">DNA damage</keyword>
<keyword id="KW-0228">DNA excision</keyword>
<keyword id="KW-0234">DNA repair</keyword>
<keyword id="KW-0267">Excision nuclease</keyword>
<keyword id="KW-0347">Helicase</keyword>
<keyword id="KW-0378">Hydrolase</keyword>
<keyword id="KW-0547">Nucleotide-binding</keyword>
<keyword id="KW-1185">Reference proteome</keyword>
<keyword id="KW-0742">SOS response</keyword>
<evidence type="ECO:0000255" key="1">
    <source>
        <dbReference type="HAMAP-Rule" id="MF_00204"/>
    </source>
</evidence>
<name>UVRB_CYTH3</name>
<protein>
    <recommendedName>
        <fullName evidence="1">UvrABC system protein B</fullName>
        <shortName evidence="1">Protein UvrB</shortName>
    </recommendedName>
    <alternativeName>
        <fullName evidence="1">Excinuclease ABC subunit B</fullName>
    </alternativeName>
</protein>
<gene>
    <name evidence="1" type="primary">uvrB</name>
    <name type="ordered locus">CHU_0008</name>
</gene>
<accession>Q11Z64</accession>
<proteinExistence type="inferred from homology"/>
<sequence length="673" mass="76708">MAFNLTSKYEPTGDQPAAIKQLVEGVERNDPAQVLLGVTGSGKTFTMANVIQQTQKPTLVLSHNKTLAAQLYGEFKQFFPENLVEYFISYYDYYQPEAFMPTSGLYIEKDLAINQEIEKLRLSATSSLMSGRRDIIVVASVSCIYGIGNPEEFRKSIVVLHKGQQINRNKLLYSFVEILYNRTTRDFTRGTFRVTGDTVDVYPAYADIAYRIQMWGDEVESIQMIEPETGKRISEQKSLTLFPANLFVTGKDSLNNAIHHIQDDLMKQVQLFEMEKRYGEAKRIQERTEFDIEMMRELGYCSGIENYSRYFDGRMPGQRPFCLIDYFPDDFLLVVDESHVTIPQIRAMFGGDRARKTNLVEYGFRLPSAMDNRPLTFDEFESINTQAIYVSATPADYELQRSEGAVVEQIIRPTGLLDPQIFIKPTVNQIDDLLDEIQERIEMGDRILVTTLTKRMAEELTKFLDGVGVRTRYIHSEVKTLDRVEILRELRLGVFDVLVGVNLLREGLDLPEVSLVAIMDADKEGFLRNVRSLVQTIGRAARNSNGKVIMYADKITASMQQAIDETSRRRATQLAYNELHGITPITVNKSKDEIMGQTKVADSNKFNKQYIEPEGEPSLAADPVVAMLNKTELTKMIDRAKKDMDKAAKDLDFVEAARYRDEMFALQKIIDSK</sequence>
<feature type="chain" id="PRO_1000077884" description="UvrABC system protein B">
    <location>
        <begin position="1"/>
        <end position="673"/>
    </location>
</feature>
<feature type="domain" description="Helicase ATP-binding" evidence="1">
    <location>
        <begin position="24"/>
        <end position="182"/>
    </location>
</feature>
<feature type="domain" description="Helicase C-terminal" evidence="1">
    <location>
        <begin position="429"/>
        <end position="591"/>
    </location>
</feature>
<feature type="domain" description="UVR" evidence="1">
    <location>
        <begin position="634"/>
        <end position="669"/>
    </location>
</feature>
<feature type="short sequence motif" description="Beta-hairpin">
    <location>
        <begin position="90"/>
        <end position="113"/>
    </location>
</feature>
<feature type="binding site" evidence="1">
    <location>
        <begin position="37"/>
        <end position="44"/>
    </location>
    <ligand>
        <name>ATP</name>
        <dbReference type="ChEBI" id="CHEBI:30616"/>
    </ligand>
</feature>
<organism>
    <name type="scientific">Cytophaga hutchinsonii (strain ATCC 33406 / DSM 1761 / CIP 103989 / NBRC 15051 / NCIMB 9469 / D465)</name>
    <dbReference type="NCBI Taxonomy" id="269798"/>
    <lineage>
        <taxon>Bacteria</taxon>
        <taxon>Pseudomonadati</taxon>
        <taxon>Bacteroidota</taxon>
        <taxon>Cytophagia</taxon>
        <taxon>Cytophagales</taxon>
        <taxon>Cytophagaceae</taxon>
        <taxon>Cytophaga</taxon>
    </lineage>
</organism>
<reference key="1">
    <citation type="journal article" date="2007" name="Appl. Environ. Microbiol.">
        <title>Genome sequence of the cellulolytic gliding bacterium Cytophaga hutchinsonii.</title>
        <authorList>
            <person name="Xie G."/>
            <person name="Bruce D.C."/>
            <person name="Challacombe J.F."/>
            <person name="Chertkov O."/>
            <person name="Detter J.C."/>
            <person name="Gilna P."/>
            <person name="Han C.S."/>
            <person name="Lucas S."/>
            <person name="Misra M."/>
            <person name="Myers G.L."/>
            <person name="Richardson P."/>
            <person name="Tapia R."/>
            <person name="Thayer N."/>
            <person name="Thompson L.S."/>
            <person name="Brettin T.S."/>
            <person name="Henrissat B."/>
            <person name="Wilson D.B."/>
            <person name="McBride M.J."/>
        </authorList>
    </citation>
    <scope>NUCLEOTIDE SEQUENCE [LARGE SCALE GENOMIC DNA]</scope>
    <source>
        <strain>ATCC 33406 / DSM 1761 / JCM 20678 / CIP 103989 / IAM 12607 / NBRC 15051 / NCIMB 9469 / D465</strain>
    </source>
</reference>
<comment type="function">
    <text evidence="1">The UvrABC repair system catalyzes the recognition and processing of DNA lesions. A damage recognition complex composed of 2 UvrA and 2 UvrB subunits scans DNA for abnormalities. Upon binding of the UvrA(2)B(2) complex to a putative damaged site, the DNA wraps around one UvrB monomer. DNA wrap is dependent on ATP binding by UvrB and probably causes local melting of the DNA helix, facilitating insertion of UvrB beta-hairpin between the DNA strands. Then UvrB probes one DNA strand for the presence of a lesion. If a lesion is found the UvrA subunits dissociate and the UvrB-DNA preincision complex is formed. This complex is subsequently bound by UvrC and the second UvrB is released. If no lesion is found, the DNA wraps around the other UvrB subunit that will check the other stand for damage.</text>
</comment>
<comment type="subunit">
    <text evidence="1">Forms a heterotetramer with UvrA during the search for lesions. Interacts with UvrC in an incision complex.</text>
</comment>
<comment type="subcellular location">
    <subcellularLocation>
        <location evidence="1">Cytoplasm</location>
    </subcellularLocation>
</comment>
<comment type="domain">
    <text evidence="1">The beta-hairpin motif is involved in DNA binding.</text>
</comment>
<comment type="similarity">
    <text evidence="1">Belongs to the UvrB family.</text>
</comment>
<dbReference type="EMBL" id="CP000383">
    <property type="protein sequence ID" value="ABG57302.1"/>
    <property type="molecule type" value="Genomic_DNA"/>
</dbReference>
<dbReference type="RefSeq" id="WP_011583418.1">
    <property type="nucleotide sequence ID" value="NC_008255.1"/>
</dbReference>
<dbReference type="SMR" id="Q11Z64"/>
<dbReference type="STRING" id="269798.CHU_0008"/>
<dbReference type="KEGG" id="chu:CHU_0008"/>
<dbReference type="eggNOG" id="COG0556">
    <property type="taxonomic scope" value="Bacteria"/>
</dbReference>
<dbReference type="HOGENOM" id="CLU_009621_2_1_10"/>
<dbReference type="OrthoDB" id="9806651at2"/>
<dbReference type="Proteomes" id="UP000001822">
    <property type="component" value="Chromosome"/>
</dbReference>
<dbReference type="GO" id="GO:0005737">
    <property type="term" value="C:cytoplasm"/>
    <property type="evidence" value="ECO:0007669"/>
    <property type="project" value="UniProtKB-SubCell"/>
</dbReference>
<dbReference type="GO" id="GO:0009380">
    <property type="term" value="C:excinuclease repair complex"/>
    <property type="evidence" value="ECO:0007669"/>
    <property type="project" value="InterPro"/>
</dbReference>
<dbReference type="GO" id="GO:0005524">
    <property type="term" value="F:ATP binding"/>
    <property type="evidence" value="ECO:0007669"/>
    <property type="project" value="UniProtKB-UniRule"/>
</dbReference>
<dbReference type="GO" id="GO:0016887">
    <property type="term" value="F:ATP hydrolysis activity"/>
    <property type="evidence" value="ECO:0007669"/>
    <property type="project" value="InterPro"/>
</dbReference>
<dbReference type="GO" id="GO:0003677">
    <property type="term" value="F:DNA binding"/>
    <property type="evidence" value="ECO:0007669"/>
    <property type="project" value="UniProtKB-UniRule"/>
</dbReference>
<dbReference type="GO" id="GO:0009381">
    <property type="term" value="F:excinuclease ABC activity"/>
    <property type="evidence" value="ECO:0007669"/>
    <property type="project" value="UniProtKB-UniRule"/>
</dbReference>
<dbReference type="GO" id="GO:0004386">
    <property type="term" value="F:helicase activity"/>
    <property type="evidence" value="ECO:0007669"/>
    <property type="project" value="UniProtKB-KW"/>
</dbReference>
<dbReference type="GO" id="GO:0006289">
    <property type="term" value="P:nucleotide-excision repair"/>
    <property type="evidence" value="ECO:0007669"/>
    <property type="project" value="UniProtKB-UniRule"/>
</dbReference>
<dbReference type="GO" id="GO:0009432">
    <property type="term" value="P:SOS response"/>
    <property type="evidence" value="ECO:0007669"/>
    <property type="project" value="UniProtKB-UniRule"/>
</dbReference>
<dbReference type="CDD" id="cd17916">
    <property type="entry name" value="DEXHc_UvrB"/>
    <property type="match status" value="1"/>
</dbReference>
<dbReference type="CDD" id="cd18790">
    <property type="entry name" value="SF2_C_UvrB"/>
    <property type="match status" value="1"/>
</dbReference>
<dbReference type="Gene3D" id="3.40.50.300">
    <property type="entry name" value="P-loop containing nucleotide triphosphate hydrolases"/>
    <property type="match status" value="3"/>
</dbReference>
<dbReference type="Gene3D" id="4.10.860.10">
    <property type="entry name" value="UVR domain"/>
    <property type="match status" value="1"/>
</dbReference>
<dbReference type="HAMAP" id="MF_00204">
    <property type="entry name" value="UvrB"/>
    <property type="match status" value="1"/>
</dbReference>
<dbReference type="InterPro" id="IPR006935">
    <property type="entry name" value="Helicase/UvrB_N"/>
</dbReference>
<dbReference type="InterPro" id="IPR014001">
    <property type="entry name" value="Helicase_ATP-bd"/>
</dbReference>
<dbReference type="InterPro" id="IPR001650">
    <property type="entry name" value="Helicase_C-like"/>
</dbReference>
<dbReference type="InterPro" id="IPR027417">
    <property type="entry name" value="P-loop_NTPase"/>
</dbReference>
<dbReference type="InterPro" id="IPR001943">
    <property type="entry name" value="UVR_dom"/>
</dbReference>
<dbReference type="InterPro" id="IPR036876">
    <property type="entry name" value="UVR_dom_sf"/>
</dbReference>
<dbReference type="InterPro" id="IPR004807">
    <property type="entry name" value="UvrB"/>
</dbReference>
<dbReference type="InterPro" id="IPR041471">
    <property type="entry name" value="UvrB_inter"/>
</dbReference>
<dbReference type="InterPro" id="IPR024759">
    <property type="entry name" value="UvrB_YAD/RRR_dom"/>
</dbReference>
<dbReference type="NCBIfam" id="NF003673">
    <property type="entry name" value="PRK05298.1"/>
    <property type="match status" value="1"/>
</dbReference>
<dbReference type="NCBIfam" id="TIGR00631">
    <property type="entry name" value="uvrb"/>
    <property type="match status" value="1"/>
</dbReference>
<dbReference type="PANTHER" id="PTHR24029">
    <property type="entry name" value="UVRABC SYSTEM PROTEIN B"/>
    <property type="match status" value="1"/>
</dbReference>
<dbReference type="PANTHER" id="PTHR24029:SF0">
    <property type="entry name" value="UVRABC SYSTEM PROTEIN B"/>
    <property type="match status" value="1"/>
</dbReference>
<dbReference type="Pfam" id="PF00271">
    <property type="entry name" value="Helicase_C"/>
    <property type="match status" value="1"/>
</dbReference>
<dbReference type="Pfam" id="PF04851">
    <property type="entry name" value="ResIII"/>
    <property type="match status" value="1"/>
</dbReference>
<dbReference type="Pfam" id="PF02151">
    <property type="entry name" value="UVR"/>
    <property type="match status" value="1"/>
</dbReference>
<dbReference type="Pfam" id="PF12344">
    <property type="entry name" value="UvrB"/>
    <property type="match status" value="1"/>
</dbReference>
<dbReference type="Pfam" id="PF17757">
    <property type="entry name" value="UvrB_inter"/>
    <property type="match status" value="1"/>
</dbReference>
<dbReference type="SMART" id="SM00487">
    <property type="entry name" value="DEXDc"/>
    <property type="match status" value="1"/>
</dbReference>
<dbReference type="SMART" id="SM00490">
    <property type="entry name" value="HELICc"/>
    <property type="match status" value="1"/>
</dbReference>
<dbReference type="SUPFAM" id="SSF46600">
    <property type="entry name" value="C-terminal UvrC-binding domain of UvrB"/>
    <property type="match status" value="1"/>
</dbReference>
<dbReference type="SUPFAM" id="SSF52540">
    <property type="entry name" value="P-loop containing nucleoside triphosphate hydrolases"/>
    <property type="match status" value="2"/>
</dbReference>
<dbReference type="PROSITE" id="PS51192">
    <property type="entry name" value="HELICASE_ATP_BIND_1"/>
    <property type="match status" value="1"/>
</dbReference>
<dbReference type="PROSITE" id="PS51194">
    <property type="entry name" value="HELICASE_CTER"/>
    <property type="match status" value="1"/>
</dbReference>
<dbReference type="PROSITE" id="PS50151">
    <property type="entry name" value="UVR"/>
    <property type="match status" value="1"/>
</dbReference>